<feature type="chain" id="PRO_0000195327" description="Glucose-1-phosphate adenylyltransferase">
    <location>
        <begin position="1"/>
        <end position="431"/>
    </location>
</feature>
<feature type="binding site" evidence="1">
    <location>
        <position position="39"/>
    </location>
    <ligand>
        <name>beta-D-fructose 1,6-bisphosphate</name>
        <dbReference type="ChEBI" id="CHEBI:32966"/>
    </ligand>
</feature>
<feature type="binding site" evidence="1">
    <location>
        <position position="40"/>
    </location>
    <ligand>
        <name>AMP</name>
        <dbReference type="ChEBI" id="CHEBI:456215"/>
    </ligand>
</feature>
<feature type="binding site" evidence="1">
    <location>
        <position position="46"/>
    </location>
    <ligand>
        <name>AMP</name>
        <dbReference type="ChEBI" id="CHEBI:456215"/>
    </ligand>
</feature>
<feature type="binding site" evidence="1">
    <location>
        <position position="52"/>
    </location>
    <ligand>
        <name>AMP</name>
        <dbReference type="ChEBI" id="CHEBI:456215"/>
    </ligand>
</feature>
<feature type="binding site" evidence="1">
    <location>
        <position position="114"/>
    </location>
    <ligand>
        <name>alpha-D-glucose 1-phosphate</name>
        <dbReference type="ChEBI" id="CHEBI:58601"/>
    </ligand>
</feature>
<feature type="binding site" evidence="1">
    <location>
        <position position="130"/>
    </location>
    <ligand>
        <name>AMP</name>
        <dbReference type="ChEBI" id="CHEBI:456215"/>
    </ligand>
</feature>
<feature type="binding site" evidence="1">
    <location>
        <position position="179"/>
    </location>
    <ligand>
        <name>alpha-D-glucose 1-phosphate</name>
        <dbReference type="ChEBI" id="CHEBI:58601"/>
    </ligand>
</feature>
<feature type="binding site" evidence="1">
    <location>
        <begin position="194"/>
        <end position="195"/>
    </location>
    <ligand>
        <name>alpha-D-glucose 1-phosphate</name>
        <dbReference type="ChEBI" id="CHEBI:58601"/>
    </ligand>
</feature>
<feature type="binding site" evidence="1">
    <location>
        <position position="212"/>
    </location>
    <ligand>
        <name>alpha-D-glucose 1-phosphate</name>
        <dbReference type="ChEBI" id="CHEBI:58601"/>
    </ligand>
</feature>
<feature type="binding site" evidence="1">
    <location>
        <position position="370"/>
    </location>
    <ligand>
        <name>AMP</name>
        <dbReference type="ChEBI" id="CHEBI:456215"/>
    </ligand>
</feature>
<feature type="binding site" evidence="1">
    <location>
        <position position="386"/>
    </location>
    <ligand>
        <name>AMP</name>
        <dbReference type="ChEBI" id="CHEBI:456215"/>
    </ligand>
</feature>
<feature type="binding site" evidence="1">
    <location>
        <begin position="419"/>
        <end position="423"/>
    </location>
    <ligand>
        <name>beta-D-fructose 1,6-bisphosphate</name>
        <dbReference type="ChEBI" id="CHEBI:32966"/>
    </ligand>
</feature>
<feature type="binding site" evidence="1">
    <location>
        <begin position="429"/>
        <end position="431"/>
    </location>
    <ligand>
        <name>beta-D-fructose 1,6-bisphosphate</name>
        <dbReference type="ChEBI" id="CHEBI:32966"/>
    </ligand>
</feature>
<feature type="site" description="Could play a key role in the communication between the regulatory and the substrate sites" evidence="1">
    <location>
        <position position="74"/>
    </location>
</feature>
<feature type="site" description="Could play a key role in the communication between the regulatory and the substrate sites" evidence="1">
    <location>
        <position position="113"/>
    </location>
</feature>
<feature type="sequence conflict" description="In Ref. 1; AAA27132." evidence="2" ref="1">
    <original>T</original>
    <variation>A</variation>
    <location>
        <position position="37"/>
    </location>
</feature>
<feature type="sequence conflict" description="In Ref. 1; AAA27132." evidence="2" ref="1">
    <original>I</original>
    <variation>V</variation>
    <location>
        <position position="53"/>
    </location>
</feature>
<feature type="sequence conflict" description="In Ref. 1; AAA27132." evidence="2" ref="1">
    <location>
        <position position="200"/>
    </location>
</feature>
<feature type="sequence conflict" description="In Ref. 1; AAA27132." evidence="2" ref="1">
    <original>P</original>
    <variation>L</variation>
    <location>
        <position position="203"/>
    </location>
</feature>
<feature type="sequence conflict" description="In Ref. 1; AAA27132." evidence="2" ref="1">
    <original>L</original>
    <variation>R</variation>
    <location>
        <position position="288"/>
    </location>
</feature>
<feature type="sequence conflict" description="In Ref. 1; AAA27132." evidence="2" ref="1">
    <original>E</original>
    <variation>Q</variation>
    <location>
        <position position="296"/>
    </location>
</feature>
<feature type="sequence conflict" description="In Ref. 1; AAA27132." evidence="2" ref="1">
    <original>P</original>
    <variation>R</variation>
    <location>
        <position position="315"/>
    </location>
</feature>
<feature type="sequence conflict" description="In Ref. 1; AAA27132." evidence="2" ref="1">
    <original>D</original>
    <variation>E</variation>
    <location>
        <position position="321"/>
    </location>
</feature>
<feature type="sequence conflict" description="In Ref. 1; AAA27132." evidence="2" ref="1">
    <original>N</original>
    <variation>K</variation>
    <location>
        <position position="331"/>
    </location>
</feature>
<feature type="sequence conflict" description="In Ref. 1; AAA27132." evidence="2" ref="1">
    <original>S</original>
    <variation>F</variation>
    <location>
        <position position="335"/>
    </location>
</feature>
<feature type="sequence conflict" description="In Ref. 1; AAA27132." evidence="2" ref="1">
    <original>V</original>
    <variation>D</variation>
    <location>
        <position position="373"/>
    </location>
</feature>
<feature type="sequence conflict" description="In Ref. 1; AAA27132." evidence="2" ref="1">
    <original>R</original>
    <variation>C</variation>
    <location>
        <position position="381"/>
    </location>
</feature>
<feature type="sequence conflict" description="In Ref. 1; AAA27132." evidence="2" ref="1">
    <original>V</original>
    <variation>GH</variation>
    <location>
        <position position="427"/>
    </location>
</feature>
<proteinExistence type="inferred from homology"/>
<sequence>MVSLEKNDRVMLARQLPLKSVALILAGGRGTRLKDLTNKRAKPAVHFGGKFRIIDFALSNCLNSGIRRIGVITQYQSHTLVQHIQRGWSLFSEEMNEFVDLLPAQQRMKGENWYRGTADAVTQNLDIIRRYKAEYVVILAGDHIYKQDYSRMLIDHVEKGARCTVACMPVPIKEATAFGVMAVDESDKIIDFVEKPANPPAMPGDASKSLASMGIYVFDADYLYELLAADDKDDASSHDFGKDIIPKITREGMAYAHPFPLSCVQSDPQAEPYWRDVGTLEAYWKANLDLASVTPELDMYDQNWPIRTHMESLPPAKFVQDRSGSHGMTLNSLVSGGCIISGSVVVQSVLFPRVRINSFCNIDSAVLLPEVWVGRSCRLRRCVIDRACIIPEGMVIGENAEEDARRFYRSEEGIVLVTREMLRKLQVKQER</sequence>
<dbReference type="EC" id="2.7.7.27" evidence="1"/>
<dbReference type="EMBL" id="M17363">
    <property type="protein sequence ID" value="AAA27132.1"/>
    <property type="molecule type" value="Genomic_DNA"/>
</dbReference>
<dbReference type="EMBL" id="AE006468">
    <property type="protein sequence ID" value="AAL22396.1"/>
    <property type="molecule type" value="Genomic_DNA"/>
</dbReference>
<dbReference type="RefSeq" id="NP_462437.1">
    <property type="nucleotide sequence ID" value="NC_003197.2"/>
</dbReference>
<dbReference type="RefSeq" id="WP_000253995.1">
    <property type="nucleotide sequence ID" value="NC_003197.2"/>
</dbReference>
<dbReference type="SMR" id="P05415"/>
<dbReference type="STRING" id="99287.STM3536"/>
<dbReference type="PaxDb" id="99287-STM3536"/>
<dbReference type="GeneID" id="1255059"/>
<dbReference type="KEGG" id="stm:STM3536"/>
<dbReference type="PATRIC" id="fig|99287.12.peg.3738"/>
<dbReference type="HOGENOM" id="CLU_029499_14_1_6"/>
<dbReference type="OMA" id="YPLTKMR"/>
<dbReference type="PhylomeDB" id="P05415"/>
<dbReference type="BioCyc" id="SENT99287:STM3536-MONOMER"/>
<dbReference type="BRENDA" id="2.7.7.27">
    <property type="organism ID" value="5542"/>
</dbReference>
<dbReference type="UniPathway" id="UPA00164"/>
<dbReference type="Proteomes" id="UP000001014">
    <property type="component" value="Chromosome"/>
</dbReference>
<dbReference type="GO" id="GO:0005524">
    <property type="term" value="F:ATP binding"/>
    <property type="evidence" value="ECO:0007669"/>
    <property type="project" value="UniProtKB-KW"/>
</dbReference>
<dbReference type="GO" id="GO:0008878">
    <property type="term" value="F:glucose-1-phosphate adenylyltransferase activity"/>
    <property type="evidence" value="ECO:0007669"/>
    <property type="project" value="UniProtKB-UniRule"/>
</dbReference>
<dbReference type="GO" id="GO:0005978">
    <property type="term" value="P:glycogen biosynthetic process"/>
    <property type="evidence" value="ECO:0007669"/>
    <property type="project" value="UniProtKB-UniRule"/>
</dbReference>
<dbReference type="CDD" id="cd02508">
    <property type="entry name" value="ADP_Glucose_PP"/>
    <property type="match status" value="1"/>
</dbReference>
<dbReference type="CDD" id="cd04651">
    <property type="entry name" value="LbH_G1P_AT_C"/>
    <property type="match status" value="1"/>
</dbReference>
<dbReference type="FunFam" id="2.160.10.10:FF:000006">
    <property type="entry name" value="Glucose-1-phosphate adenylyltransferase"/>
    <property type="match status" value="1"/>
</dbReference>
<dbReference type="FunFam" id="3.90.550.10:FF:000014">
    <property type="entry name" value="Glucose-1-phosphate adenylyltransferase"/>
    <property type="match status" value="1"/>
</dbReference>
<dbReference type="Gene3D" id="2.160.10.10">
    <property type="entry name" value="Hexapeptide repeat proteins"/>
    <property type="match status" value="1"/>
</dbReference>
<dbReference type="Gene3D" id="3.90.550.10">
    <property type="entry name" value="Spore Coat Polysaccharide Biosynthesis Protein SpsA, Chain A"/>
    <property type="match status" value="1"/>
</dbReference>
<dbReference type="HAMAP" id="MF_00624">
    <property type="entry name" value="GlgC"/>
    <property type="match status" value="1"/>
</dbReference>
<dbReference type="InterPro" id="IPR011831">
    <property type="entry name" value="ADP-Glc_PPase"/>
</dbReference>
<dbReference type="InterPro" id="IPR005836">
    <property type="entry name" value="ADP_Glu_pyroP_CS"/>
</dbReference>
<dbReference type="InterPro" id="IPR023049">
    <property type="entry name" value="GlgC_bac"/>
</dbReference>
<dbReference type="InterPro" id="IPR056818">
    <property type="entry name" value="GlmU/GlgC-like_hexapep"/>
</dbReference>
<dbReference type="InterPro" id="IPR005835">
    <property type="entry name" value="NTP_transferase_dom"/>
</dbReference>
<dbReference type="InterPro" id="IPR029044">
    <property type="entry name" value="Nucleotide-diphossugar_trans"/>
</dbReference>
<dbReference type="InterPro" id="IPR011004">
    <property type="entry name" value="Trimer_LpxA-like_sf"/>
</dbReference>
<dbReference type="NCBIfam" id="TIGR02091">
    <property type="entry name" value="glgC"/>
    <property type="match status" value="1"/>
</dbReference>
<dbReference type="NCBIfam" id="NF001947">
    <property type="entry name" value="PRK00725.1"/>
    <property type="match status" value="1"/>
</dbReference>
<dbReference type="NCBIfam" id="NF002023">
    <property type="entry name" value="PRK00844.1"/>
    <property type="match status" value="1"/>
</dbReference>
<dbReference type="PANTHER" id="PTHR43523:SF2">
    <property type="entry name" value="GLUCOSE-1-PHOSPHATE ADENYLYLTRANSFERASE"/>
    <property type="match status" value="1"/>
</dbReference>
<dbReference type="PANTHER" id="PTHR43523">
    <property type="entry name" value="GLUCOSE-1-PHOSPHATE ADENYLYLTRANSFERASE-RELATED"/>
    <property type="match status" value="1"/>
</dbReference>
<dbReference type="Pfam" id="PF24894">
    <property type="entry name" value="Hexapep_GlmU"/>
    <property type="match status" value="1"/>
</dbReference>
<dbReference type="Pfam" id="PF00483">
    <property type="entry name" value="NTP_transferase"/>
    <property type="match status" value="1"/>
</dbReference>
<dbReference type="SUPFAM" id="SSF53448">
    <property type="entry name" value="Nucleotide-diphospho-sugar transferases"/>
    <property type="match status" value="1"/>
</dbReference>
<dbReference type="SUPFAM" id="SSF51161">
    <property type="entry name" value="Trimeric LpxA-like enzymes"/>
    <property type="match status" value="1"/>
</dbReference>
<dbReference type="PROSITE" id="PS00808">
    <property type="entry name" value="ADP_GLC_PYROPHOSPH_1"/>
    <property type="match status" value="1"/>
</dbReference>
<dbReference type="PROSITE" id="PS00809">
    <property type="entry name" value="ADP_GLC_PYROPHOSPH_2"/>
    <property type="match status" value="1"/>
</dbReference>
<dbReference type="PROSITE" id="PS00810">
    <property type="entry name" value="ADP_GLC_PYROPHOSPH_3"/>
    <property type="match status" value="1"/>
</dbReference>
<organism>
    <name type="scientific">Salmonella typhimurium (strain LT2 / SGSC1412 / ATCC 700720)</name>
    <dbReference type="NCBI Taxonomy" id="99287"/>
    <lineage>
        <taxon>Bacteria</taxon>
        <taxon>Pseudomonadati</taxon>
        <taxon>Pseudomonadota</taxon>
        <taxon>Gammaproteobacteria</taxon>
        <taxon>Enterobacterales</taxon>
        <taxon>Enterobacteriaceae</taxon>
        <taxon>Salmonella</taxon>
    </lineage>
</organism>
<protein>
    <recommendedName>
        <fullName evidence="1">Glucose-1-phosphate adenylyltransferase</fullName>
        <ecNumber evidence="1">2.7.7.27</ecNumber>
    </recommendedName>
    <alternativeName>
        <fullName evidence="1">ADP-glucose pyrophosphorylase</fullName>
        <shortName evidence="1">ADPGlc PPase</shortName>
    </alternativeName>
    <alternativeName>
        <fullName evidence="1">ADP-glucose synthase</fullName>
    </alternativeName>
</protein>
<accession>P05415</accession>
<evidence type="ECO:0000255" key="1">
    <source>
        <dbReference type="HAMAP-Rule" id="MF_00624"/>
    </source>
</evidence>
<evidence type="ECO:0000305" key="2"/>
<name>GLGC_SALTY</name>
<reference key="1">
    <citation type="journal article" date="1987" name="J. Bacteriol.">
        <title>Biosynthesis of bacterial glycogen: primary structure of Salmonella typhimurium ADPglucose synthetase as deduced from the nucleotide sequence of the glgC gene.</title>
        <authorList>
            <person name="Leung P.S.C."/>
            <person name="Preiss J."/>
        </authorList>
    </citation>
    <scope>NUCLEOTIDE SEQUENCE [GENOMIC DNA]</scope>
</reference>
<reference key="2">
    <citation type="journal article" date="2001" name="Nature">
        <title>Complete genome sequence of Salmonella enterica serovar Typhimurium LT2.</title>
        <authorList>
            <person name="McClelland M."/>
            <person name="Sanderson K.E."/>
            <person name="Spieth J."/>
            <person name="Clifton S.W."/>
            <person name="Latreille P."/>
            <person name="Courtney L."/>
            <person name="Porwollik S."/>
            <person name="Ali J."/>
            <person name="Dante M."/>
            <person name="Du F."/>
            <person name="Hou S."/>
            <person name="Layman D."/>
            <person name="Leonard S."/>
            <person name="Nguyen C."/>
            <person name="Scott K."/>
            <person name="Holmes A."/>
            <person name="Grewal N."/>
            <person name="Mulvaney E."/>
            <person name="Ryan E."/>
            <person name="Sun H."/>
            <person name="Florea L."/>
            <person name="Miller W."/>
            <person name="Stoneking T."/>
            <person name="Nhan M."/>
            <person name="Waterston R."/>
            <person name="Wilson R.K."/>
        </authorList>
    </citation>
    <scope>NUCLEOTIDE SEQUENCE [LARGE SCALE GENOMIC DNA]</scope>
    <source>
        <strain>LT2 / SGSC1412 / ATCC 700720</strain>
    </source>
</reference>
<keyword id="KW-0021">Allosteric enzyme</keyword>
<keyword id="KW-0067">ATP-binding</keyword>
<keyword id="KW-0119">Carbohydrate metabolism</keyword>
<keyword id="KW-0320">Glycogen biosynthesis</keyword>
<keyword id="KW-0321">Glycogen metabolism</keyword>
<keyword id="KW-0547">Nucleotide-binding</keyword>
<keyword id="KW-0548">Nucleotidyltransferase</keyword>
<keyword id="KW-1185">Reference proteome</keyword>
<keyword id="KW-0808">Transferase</keyword>
<gene>
    <name evidence="1" type="primary">glgC</name>
    <name type="ordered locus">STM3536</name>
</gene>
<comment type="function">
    <text evidence="1">Involved in the biosynthesis of ADP-glucose, a building block required for the elongation reactions to produce glycogen. Catalyzes the reaction between ATP and alpha-D-glucose 1-phosphate (G1P) to produce pyrophosphate and ADP-Glc.</text>
</comment>
<comment type="catalytic activity">
    <reaction evidence="1">
        <text>alpha-D-glucose 1-phosphate + ATP + H(+) = ADP-alpha-D-glucose + diphosphate</text>
        <dbReference type="Rhea" id="RHEA:12120"/>
        <dbReference type="ChEBI" id="CHEBI:15378"/>
        <dbReference type="ChEBI" id="CHEBI:30616"/>
        <dbReference type="ChEBI" id="CHEBI:33019"/>
        <dbReference type="ChEBI" id="CHEBI:57498"/>
        <dbReference type="ChEBI" id="CHEBI:58601"/>
        <dbReference type="EC" id="2.7.7.27"/>
    </reaction>
</comment>
<comment type="activity regulation">
    <text evidence="1">Allosterically activated by fructose-1,6-bisphosphate (F16BP) and inhibited by AMP.</text>
</comment>
<comment type="pathway">
    <text evidence="1">Glycan biosynthesis; glycogen biosynthesis.</text>
</comment>
<comment type="subunit">
    <text evidence="1">Homotetramer.</text>
</comment>
<comment type="similarity">
    <text evidence="1">Belongs to the bacterial/plant glucose-1-phosphate adenylyltransferase family.</text>
</comment>